<name>PICK1_BOVIN</name>
<dbReference type="EMBL" id="BC111358">
    <property type="protein sequence ID" value="AAI11359.1"/>
    <property type="molecule type" value="mRNA"/>
</dbReference>
<dbReference type="SMR" id="Q2T9M1"/>
<dbReference type="FunCoup" id="Q2T9M1">
    <property type="interactions" value="867"/>
</dbReference>
<dbReference type="STRING" id="9913.ENSBTAP00000020311"/>
<dbReference type="PaxDb" id="9913-ENSBTAP00000040340"/>
<dbReference type="eggNOG" id="KOG3651">
    <property type="taxonomic scope" value="Eukaryota"/>
</dbReference>
<dbReference type="InParanoid" id="Q2T9M1"/>
<dbReference type="OrthoDB" id="5917245at2759"/>
<dbReference type="Proteomes" id="UP000009136">
    <property type="component" value="Unplaced"/>
</dbReference>
<dbReference type="GO" id="GO:0005856">
    <property type="term" value="C:cytoskeleton"/>
    <property type="evidence" value="ECO:0007669"/>
    <property type="project" value="UniProtKB-SubCell"/>
</dbReference>
<dbReference type="GO" id="GO:0043005">
    <property type="term" value="C:neuron projection"/>
    <property type="evidence" value="ECO:0000250"/>
    <property type="project" value="UniProtKB"/>
</dbReference>
<dbReference type="GO" id="GO:0048471">
    <property type="term" value="C:perinuclear region of cytoplasm"/>
    <property type="evidence" value="ECO:0007669"/>
    <property type="project" value="UniProtKB-SubCell"/>
</dbReference>
<dbReference type="GO" id="GO:0005886">
    <property type="term" value="C:plasma membrane"/>
    <property type="evidence" value="ECO:0007669"/>
    <property type="project" value="GOC"/>
</dbReference>
<dbReference type="GO" id="GO:0014069">
    <property type="term" value="C:postsynaptic density"/>
    <property type="evidence" value="ECO:0000318"/>
    <property type="project" value="GO_Central"/>
</dbReference>
<dbReference type="GO" id="GO:0008021">
    <property type="term" value="C:synaptic vesicle"/>
    <property type="evidence" value="ECO:0000318"/>
    <property type="project" value="GO_Central"/>
</dbReference>
<dbReference type="GO" id="GO:0032588">
    <property type="term" value="C:trans-Golgi network membrane"/>
    <property type="evidence" value="ECO:0000318"/>
    <property type="project" value="GO_Central"/>
</dbReference>
<dbReference type="GO" id="GO:0051015">
    <property type="term" value="F:actin filament binding"/>
    <property type="evidence" value="ECO:0000250"/>
    <property type="project" value="UniProtKB"/>
</dbReference>
<dbReference type="GO" id="GO:0071933">
    <property type="term" value="F:Arp2/3 complex binding"/>
    <property type="evidence" value="ECO:0000250"/>
    <property type="project" value="UniProtKB"/>
</dbReference>
<dbReference type="GO" id="GO:0046872">
    <property type="term" value="F:metal ion binding"/>
    <property type="evidence" value="ECO:0007669"/>
    <property type="project" value="UniProtKB-KW"/>
</dbReference>
<dbReference type="GO" id="GO:0005543">
    <property type="term" value="F:phospholipid binding"/>
    <property type="evidence" value="ECO:0000318"/>
    <property type="project" value="GO_Central"/>
</dbReference>
<dbReference type="GO" id="GO:0019904">
    <property type="term" value="F:protein domain specific binding"/>
    <property type="evidence" value="ECO:0007669"/>
    <property type="project" value="InterPro"/>
</dbReference>
<dbReference type="GO" id="GO:0005080">
    <property type="term" value="F:protein kinase C binding"/>
    <property type="evidence" value="ECO:0000318"/>
    <property type="project" value="GO_Central"/>
</dbReference>
<dbReference type="GO" id="GO:0036294">
    <property type="term" value="P:cellular response to decreased oxygen levels"/>
    <property type="evidence" value="ECO:0000250"/>
    <property type="project" value="UniProtKB"/>
</dbReference>
<dbReference type="GO" id="GO:0042149">
    <property type="term" value="P:cellular response to glucose starvation"/>
    <property type="evidence" value="ECO:0000250"/>
    <property type="project" value="UniProtKB"/>
</dbReference>
<dbReference type="GO" id="GO:0097062">
    <property type="term" value="P:dendritic spine maintenance"/>
    <property type="evidence" value="ECO:0000250"/>
    <property type="project" value="UniProtKB"/>
</dbReference>
<dbReference type="GO" id="GO:0097061">
    <property type="term" value="P:dendritic spine organization"/>
    <property type="evidence" value="ECO:0000250"/>
    <property type="project" value="UniProtKB"/>
</dbReference>
<dbReference type="GO" id="GO:0021782">
    <property type="term" value="P:glial cell development"/>
    <property type="evidence" value="ECO:0000250"/>
    <property type="project" value="UniProtKB"/>
</dbReference>
<dbReference type="GO" id="GO:0006886">
    <property type="term" value="P:intracellular protein transport"/>
    <property type="evidence" value="ECO:0000318"/>
    <property type="project" value="GO_Central"/>
</dbReference>
<dbReference type="GO" id="GO:0060292">
    <property type="term" value="P:long-term synaptic depression"/>
    <property type="evidence" value="ECO:0000250"/>
    <property type="project" value="UniProtKB"/>
</dbReference>
<dbReference type="GO" id="GO:0034316">
    <property type="term" value="P:negative regulation of Arp2/3 complex-mediated actin nucleation"/>
    <property type="evidence" value="ECO:0000250"/>
    <property type="project" value="UniProtKB"/>
</dbReference>
<dbReference type="GO" id="GO:0002092">
    <property type="term" value="P:positive regulation of receptor internalization"/>
    <property type="evidence" value="ECO:0000250"/>
    <property type="project" value="UniProtKB"/>
</dbReference>
<dbReference type="GO" id="GO:0043113">
    <property type="term" value="P:receptor clustering"/>
    <property type="evidence" value="ECO:0000318"/>
    <property type="project" value="GO_Central"/>
</dbReference>
<dbReference type="GO" id="GO:0034315">
    <property type="term" value="P:regulation of Arp2/3 complex-mediated actin nucleation"/>
    <property type="evidence" value="ECO:0000318"/>
    <property type="project" value="GO_Central"/>
</dbReference>
<dbReference type="CDD" id="cd07659">
    <property type="entry name" value="BAR_PICK1"/>
    <property type="match status" value="1"/>
</dbReference>
<dbReference type="CDD" id="cd06722">
    <property type="entry name" value="PDZ_PICK1-like"/>
    <property type="match status" value="1"/>
</dbReference>
<dbReference type="FunFam" id="1.20.1270.60:FF:000023">
    <property type="entry name" value="Interacting with PRKCA"/>
    <property type="match status" value="1"/>
</dbReference>
<dbReference type="FunFam" id="2.30.42.10:FF:000073">
    <property type="entry name" value="Interacting with PRKCA"/>
    <property type="match status" value="1"/>
</dbReference>
<dbReference type="Gene3D" id="2.30.42.10">
    <property type="match status" value="1"/>
</dbReference>
<dbReference type="Gene3D" id="1.20.1270.60">
    <property type="entry name" value="Arfaptin homology (AH) domain/BAR domain"/>
    <property type="match status" value="1"/>
</dbReference>
<dbReference type="InterPro" id="IPR027267">
    <property type="entry name" value="AH/BAR_dom_sf"/>
</dbReference>
<dbReference type="InterPro" id="IPR010504">
    <property type="entry name" value="AH_dom"/>
</dbReference>
<dbReference type="InterPro" id="IPR030798">
    <property type="entry name" value="Arfaptin_fam"/>
</dbReference>
<dbReference type="InterPro" id="IPR001478">
    <property type="entry name" value="PDZ"/>
</dbReference>
<dbReference type="InterPro" id="IPR036034">
    <property type="entry name" value="PDZ_sf"/>
</dbReference>
<dbReference type="InterPro" id="IPR037959">
    <property type="entry name" value="PICK1_BAR"/>
</dbReference>
<dbReference type="PANTHER" id="PTHR12141">
    <property type="entry name" value="ARFAPTIN-RELATED"/>
    <property type="match status" value="1"/>
</dbReference>
<dbReference type="PANTHER" id="PTHR12141:SF1">
    <property type="entry name" value="PRKCA-BINDING PROTEIN"/>
    <property type="match status" value="1"/>
</dbReference>
<dbReference type="Pfam" id="PF06456">
    <property type="entry name" value="Arfaptin"/>
    <property type="match status" value="1"/>
</dbReference>
<dbReference type="Pfam" id="PF00595">
    <property type="entry name" value="PDZ"/>
    <property type="match status" value="1"/>
</dbReference>
<dbReference type="SMART" id="SM01015">
    <property type="entry name" value="Arfaptin"/>
    <property type="match status" value="1"/>
</dbReference>
<dbReference type="SMART" id="SM00228">
    <property type="entry name" value="PDZ"/>
    <property type="match status" value="1"/>
</dbReference>
<dbReference type="SUPFAM" id="SSF103657">
    <property type="entry name" value="BAR/IMD domain-like"/>
    <property type="match status" value="1"/>
</dbReference>
<dbReference type="SUPFAM" id="SSF50156">
    <property type="entry name" value="PDZ domain-like"/>
    <property type="match status" value="1"/>
</dbReference>
<dbReference type="PROSITE" id="PS50870">
    <property type="entry name" value="AH"/>
    <property type="match status" value="1"/>
</dbReference>
<dbReference type="PROSITE" id="PS50106">
    <property type="entry name" value="PDZ"/>
    <property type="match status" value="1"/>
</dbReference>
<keyword id="KW-0009">Actin-binding</keyword>
<keyword id="KW-0106">Calcium</keyword>
<keyword id="KW-0963">Cytoplasm</keyword>
<keyword id="KW-0206">Cytoskeleton</keyword>
<keyword id="KW-0449">Lipoprotein</keyword>
<keyword id="KW-0472">Membrane</keyword>
<keyword id="KW-0479">Metal-binding</keyword>
<keyword id="KW-0564">Palmitate</keyword>
<keyword id="KW-0597">Phosphoprotein</keyword>
<keyword id="KW-1185">Reference proteome</keyword>
<keyword id="KW-0770">Synapse</keyword>
<keyword id="KW-0771">Synaptosome</keyword>
<keyword id="KW-0862">Zinc</keyword>
<gene>
    <name type="primary">PICK1</name>
    <name type="synonym">PRKCABP</name>
</gene>
<evidence type="ECO:0000250" key="1"/>
<evidence type="ECO:0000250" key="2">
    <source>
        <dbReference type="UniProtKB" id="Q62083"/>
    </source>
</evidence>
<evidence type="ECO:0000250" key="3">
    <source>
        <dbReference type="UniProtKB" id="Q9EP80"/>
    </source>
</evidence>
<evidence type="ECO:0000250" key="4">
    <source>
        <dbReference type="UniProtKB" id="Q9NRD5"/>
    </source>
</evidence>
<evidence type="ECO:0000255" key="5">
    <source>
        <dbReference type="PROSITE-ProRule" id="PRU00143"/>
    </source>
</evidence>
<evidence type="ECO:0000255" key="6">
    <source>
        <dbReference type="PROSITE-ProRule" id="PRU00294"/>
    </source>
</evidence>
<evidence type="ECO:0000256" key="7">
    <source>
        <dbReference type="SAM" id="MobiDB-lite"/>
    </source>
</evidence>
<protein>
    <recommendedName>
        <fullName>PRKCA-binding protein</fullName>
    </recommendedName>
    <alternativeName>
        <fullName>Protein interacting with C kinase 1</fullName>
    </alternativeName>
    <alternativeName>
        <fullName>Protein kinase C-alpha-binding protein</fullName>
    </alternativeName>
</protein>
<reference key="1">
    <citation type="submission" date="2005-12" db="EMBL/GenBank/DDBJ databases">
        <authorList>
            <consortium name="NIH - Mammalian Gene Collection (MGC) project"/>
        </authorList>
    </citation>
    <scope>NUCLEOTIDE SEQUENCE [LARGE SCALE MRNA]</scope>
    <source>
        <strain>Crossbred X Angus</strain>
        <tissue>Liver</tissue>
    </source>
</reference>
<comment type="function">
    <text evidence="1">Probable adapter protein that bind to and organize the subcellular localization of a variety of membrane proteins containing some PDZ recognition sequence. Involved in the clustering of various receptors, possibly by acting at the receptor internalization level. Plays a role in synaptic plasticity by regulating the trafficking and internalization of AMPA receptors. May be regulated upon PRKCA activation. May regulate ASIC1/ASIC3 channel. Regulates actin polymerization by inhibiting the actin-nucleating activity of the Arp2/3 complex; the function is competitive with nucleation promoting factors and is linked to neuronal morphology regulation and AMPA receptor (AMPAR) endocytosis. Via interaction with the Arp2/3 complex involved in regulation of synaptic plasicity of excitatory synapses and required for spine shrinkage during long-term depression (LTD). Involved in regulation of astrocyte morphology, antagonistic to Arp2/3 complex activator WASL/N-WASP function (By similarity).</text>
</comment>
<comment type="subunit">
    <text evidence="2 4">Monomer and homodimer. Interacts with CXADR. Interacts presynaptically with the glutamate receptors GRIA2, GRIA3, GRIK3, isoform 3 of GRIA4, isoform A of GRM4, GRM7 and GRM8; with NAPA and NAPB; and with BTG2. The interaction with NAPA and NAPB disrupts the interaction with GRIA2, conducting to the internalization of GRIA2. Interacts with PRKCA; with the amine transporters SLC6A2 and SLC6A3; with the channels ASIC1 and ASIC2; with the GTP-binding proteins ARF1 and ARF3; with the ephrin receptor tyrosine kinases EPHA7, EPHB1 and EPHB2; with ERBB2 and through its PDZ domain with the C-terminal tail of PRLHR. Interacts with UNC5A. Interacts (via AH domain) with NCS1/FREQ; in a calcium-dependent manner. Interacts with F-actin and associates with the ARP2/3 complex. Interacts (via PDZ domain) with ARF1 (activated); the interaction blocks Arp2/3 complex inhibition. Interacts with SORCS3 (By similarity).</text>
</comment>
<comment type="subcellular location">
    <subcellularLocation>
        <location evidence="3">Cytoplasm</location>
        <location evidence="3">Perinuclear region</location>
    </subcellularLocation>
    <subcellularLocation>
        <location evidence="3">Membrane</location>
        <topology evidence="3">Peripheral membrane protein</topology>
    </subcellularLocation>
    <subcellularLocation>
        <location evidence="2">Membrane</location>
        <topology evidence="2">Lipid-anchor</topology>
    </subcellularLocation>
    <subcellularLocation>
        <location evidence="3">Postsynaptic density</location>
    </subcellularLocation>
    <subcellularLocation>
        <location evidence="3">Synapse</location>
        <location evidence="3">Synaptosome</location>
    </subcellularLocation>
    <subcellularLocation>
        <location evidence="3">Cytoplasm</location>
        <location evidence="3">Cytoskeleton</location>
    </subcellularLocation>
    <text evidence="3">Also membrane-associated, present at excitatory synapses.</text>
</comment>
<comment type="domain">
    <text evidence="1">The AH domain mediates binding to F-actin.</text>
</comment>
<comment type="domain">
    <text evidence="1">The unoccupied PDZ domain is probably involved in allosteric modulation by forming an intramolecular bridge with the AH domain leading to a 'closed' formation. Binding of a PDZ ligand, such as GRIA2, allows enhanced interactions with F-actin and the Arp2/3 complex thus enhanced inhibition of actin polymerization (By similarity).</text>
</comment>
<comment type="PTM">
    <text evidence="1">Phosphorylation at Thr-82 appears to inhibit the interaction with AMPA receptors.</text>
</comment>
<comment type="PTM">
    <text evidence="1">Palmitoylation on Cys-415 is essential for long-term synaptic depression (LTD).</text>
</comment>
<sequence>MFADLGYDIEEDKLGIPTVPGKVTLQKDAQNLIGISIGGGAQYCPCLYIVQVFDNTPAALDGTVAAGDEITGVNGRSIKGKTKVEVAKMIQEVKGEVTIHYNKLQADPKQGMSLDIVLKKVKHRLVENMSSGTADALGLSRAILCNDGLVKRLEELERTAELYKGMTEHTKNLLRAFYELSQTHRAFGDVFSVIGVREPQPAASEAFVKFADAHRSIEKFGIRLLKTIKPMLTDLNTYLNKAIPDTRLTIKKYLDVKFEYLSYCLKVKEMDDEEYSCIALGEPLYRVSTGNYEYRLILRCRQEARARFSQMRKDVLEKMELLDQEHVQDIVLQLQRFVSTMSKYYNDCYSVLRDADVFPIEVDLAHTTLAYGLSQDEFTDGEDEEDEDEEDTAAGEPPRDSRGAAGPLDKGGSWCNS</sequence>
<proteinExistence type="evidence at transcript level"/>
<accession>Q2T9M1</accession>
<feature type="chain" id="PRO_0000318898" description="PRKCA-binding protein">
    <location>
        <begin position="1"/>
        <end position="417"/>
    </location>
</feature>
<feature type="domain" description="PDZ" evidence="5">
    <location>
        <begin position="22"/>
        <end position="105"/>
    </location>
</feature>
<feature type="domain" description="AH" evidence="6">
    <location>
        <begin position="144"/>
        <end position="357"/>
    </location>
</feature>
<feature type="region of interest" description="Disordered" evidence="7">
    <location>
        <begin position="375"/>
        <end position="417"/>
    </location>
</feature>
<feature type="compositionally biased region" description="Acidic residues" evidence="7">
    <location>
        <begin position="377"/>
        <end position="393"/>
    </location>
</feature>
<feature type="binding site" evidence="1">
    <location>
        <position position="44"/>
    </location>
    <ligand>
        <name>Zn(2+)</name>
        <dbReference type="ChEBI" id="CHEBI:29105"/>
    </ligand>
</feature>
<feature type="binding site" evidence="1">
    <location>
        <position position="46"/>
    </location>
    <ligand>
        <name>Zn(2+)</name>
        <dbReference type="ChEBI" id="CHEBI:29105"/>
    </ligand>
</feature>
<feature type="modified residue" description="Phosphothreonine" evidence="4">
    <location>
        <position position="82"/>
    </location>
</feature>
<feature type="lipid moiety-binding region" description="S-palmitoyl cysteine; by DHHC8" evidence="1">
    <location>
        <position position="415"/>
    </location>
</feature>
<organism>
    <name type="scientific">Bos taurus</name>
    <name type="common">Bovine</name>
    <dbReference type="NCBI Taxonomy" id="9913"/>
    <lineage>
        <taxon>Eukaryota</taxon>
        <taxon>Metazoa</taxon>
        <taxon>Chordata</taxon>
        <taxon>Craniata</taxon>
        <taxon>Vertebrata</taxon>
        <taxon>Euteleostomi</taxon>
        <taxon>Mammalia</taxon>
        <taxon>Eutheria</taxon>
        <taxon>Laurasiatheria</taxon>
        <taxon>Artiodactyla</taxon>
        <taxon>Ruminantia</taxon>
        <taxon>Pecora</taxon>
        <taxon>Bovidae</taxon>
        <taxon>Bovinae</taxon>
        <taxon>Bos</taxon>
    </lineage>
</organism>